<proteinExistence type="inferred from homology"/>
<sequence length="35" mass="4045">MEALVYTFLLVSTLGIIFFAIFFREPPKVPTKKVK</sequence>
<feature type="chain" id="PRO_0000217955" description="Photosystem II reaction center protein T">
    <location>
        <begin position="1"/>
        <end position="35"/>
    </location>
</feature>
<feature type="transmembrane region" description="Helical" evidence="1">
    <location>
        <begin position="3"/>
        <end position="23"/>
    </location>
</feature>
<dbReference type="EMBL" id="AF528903">
    <property type="protein sequence ID" value="AAQ09398.1"/>
    <property type="molecule type" value="Genomic_DNA"/>
</dbReference>
<dbReference type="RefSeq" id="YP_004563894.1">
    <property type="nucleotide sequence ID" value="NC_015605.1"/>
</dbReference>
<dbReference type="SMR" id="Q6EYH5"/>
<dbReference type="GeneID" id="10743566"/>
<dbReference type="GO" id="GO:0009535">
    <property type="term" value="C:chloroplast thylakoid membrane"/>
    <property type="evidence" value="ECO:0007669"/>
    <property type="project" value="UniProtKB-SubCell"/>
</dbReference>
<dbReference type="GO" id="GO:0009539">
    <property type="term" value="C:photosystem II reaction center"/>
    <property type="evidence" value="ECO:0007669"/>
    <property type="project" value="InterPro"/>
</dbReference>
<dbReference type="GO" id="GO:0015979">
    <property type="term" value="P:photosynthesis"/>
    <property type="evidence" value="ECO:0007669"/>
    <property type="project" value="UniProtKB-UniRule"/>
</dbReference>
<dbReference type="HAMAP" id="MF_00808">
    <property type="entry name" value="PSII_PsbT"/>
    <property type="match status" value="1"/>
</dbReference>
<dbReference type="InterPro" id="IPR001743">
    <property type="entry name" value="PSII_PsbT"/>
</dbReference>
<dbReference type="InterPro" id="IPR037268">
    <property type="entry name" value="PSII_PsbT_sf"/>
</dbReference>
<dbReference type="PANTHER" id="PTHR36411">
    <property type="match status" value="1"/>
</dbReference>
<dbReference type="PANTHER" id="PTHR36411:SF2">
    <property type="entry name" value="PHOTOSYSTEM II REACTION CENTER PROTEIN T"/>
    <property type="match status" value="1"/>
</dbReference>
<dbReference type="Pfam" id="PF01405">
    <property type="entry name" value="PsbT"/>
    <property type="match status" value="1"/>
</dbReference>
<dbReference type="SUPFAM" id="SSF161029">
    <property type="entry name" value="Photosystem II reaction center protein T, PsbT"/>
    <property type="match status" value="1"/>
</dbReference>
<reference key="1">
    <citation type="submission" date="2002-07" db="EMBL/GenBank/DDBJ databases">
        <title>Parsing out signal and noise for seed-plant phylogenetic inference.</title>
        <authorList>
            <person name="Graham S.W."/>
            <person name="Rai H.S."/>
            <person name="Ikegami K."/>
            <person name="Reeves P.A."/>
            <person name="Olmstead R.G."/>
        </authorList>
    </citation>
    <scope>NUCLEOTIDE SEQUENCE [GENOMIC DNA]</scope>
</reference>
<organism>
    <name type="scientific">Nelumbo lutea</name>
    <name type="common">American lotus</name>
    <name type="synonym">Nelumbo nucifera subsp. lutea</name>
    <dbReference type="NCBI Taxonomy" id="4431"/>
    <lineage>
        <taxon>Eukaryota</taxon>
        <taxon>Viridiplantae</taxon>
        <taxon>Streptophyta</taxon>
        <taxon>Embryophyta</taxon>
        <taxon>Tracheophyta</taxon>
        <taxon>Spermatophyta</taxon>
        <taxon>Magnoliopsida</taxon>
        <taxon>Proteales</taxon>
        <taxon>Nelumbonaceae</taxon>
        <taxon>Nelumbo</taxon>
    </lineage>
</organism>
<comment type="function">
    <text evidence="1">Found at the monomer-monomer interface of the photosystem II (PS II) dimer, plays a role in assembly and dimerization of PSII. PSII is a light-driven water plastoquinone oxidoreductase, using light energy to abstract electrons from H(2)O, generating a proton gradient subsequently used for ATP formation.</text>
</comment>
<comment type="subunit">
    <text evidence="1">PSII is composed of 1 copy each of membrane proteins PsbA, PsbB, PsbC, PsbD, PsbE, PsbF, PsbH, PsbI, PsbJ, PsbK, PsbL, PsbM, PsbT, PsbY, PsbZ, Psb30/Ycf12, at least 3 peripheral proteins of the oxygen-evolving complex and a large number of cofactors. It forms dimeric complexes.</text>
</comment>
<comment type="subcellular location">
    <subcellularLocation>
        <location evidence="1">Plastid</location>
        <location evidence="1">Chloroplast thylakoid membrane</location>
        <topology evidence="1">Single-pass membrane protein</topology>
    </subcellularLocation>
</comment>
<comment type="similarity">
    <text evidence="1">Belongs to the PsbT family.</text>
</comment>
<name>PSBT_NELLU</name>
<evidence type="ECO:0000255" key="1">
    <source>
        <dbReference type="HAMAP-Rule" id="MF_00808"/>
    </source>
</evidence>
<protein>
    <recommendedName>
        <fullName evidence="1">Photosystem II reaction center protein T</fullName>
        <shortName evidence="1">PSII-T</shortName>
    </recommendedName>
</protein>
<geneLocation type="chloroplast"/>
<accession>Q6EYH5</accession>
<gene>
    <name evidence="1" type="primary">psbT</name>
</gene>
<keyword id="KW-0150">Chloroplast</keyword>
<keyword id="KW-0472">Membrane</keyword>
<keyword id="KW-0602">Photosynthesis</keyword>
<keyword id="KW-0604">Photosystem II</keyword>
<keyword id="KW-0934">Plastid</keyword>
<keyword id="KW-0793">Thylakoid</keyword>
<keyword id="KW-0812">Transmembrane</keyword>
<keyword id="KW-1133">Transmembrane helix</keyword>